<evidence type="ECO:0000255" key="1">
    <source>
        <dbReference type="HAMAP-Rule" id="MF_01115"/>
    </source>
</evidence>
<accession>B6I6U0</accession>
<sequence>MLHPRARTMLLLSLPAVAIGIASSLILIVVMKIASALQNLLWQRLPGTLGIAQDSPLWIIGVLTLTGIAVGLVIRFSQGHAGPDPACEPLIGAPVPPSALPGLIVALILGLAGGVSLGPEHPIMTVNIALAVAIGARLLPRVNRMEWTILASAGTIGALFGTPVAAALIFSQTLNGSSEVPLWDRLFAPLMAAAAGALTTGLFFHPHFSLPIAHYGQMEMTDILSGAIVAAIAIAAGMVAVWCLPRLHAMMNQMKNPVLVLGIGGFILGILGVIGGPVSLFKGLDEMQQMVANQAFSTSDYFLLAVIKLAALVVAAASGFRGGRIFPAVFVGVALGLMLHEHVPAVPAAITVSCAILGIVLVVTRDGWLSLFMAAVVVPNTTLLPLLCIVMLPAWLLLAGKPMMMVNRPKQQPPHDNV</sequence>
<proteinExistence type="inferred from homology"/>
<feature type="chain" id="PRO_1000137213" description="Putative ion-transport protein YfeO">
    <location>
        <begin position="1"/>
        <end position="418"/>
    </location>
</feature>
<feature type="transmembrane region" description="Helical" evidence="1">
    <location>
        <begin position="10"/>
        <end position="30"/>
    </location>
</feature>
<feature type="transmembrane region" description="Helical" evidence="1">
    <location>
        <begin position="54"/>
        <end position="74"/>
    </location>
</feature>
<feature type="transmembrane region" description="Helical" evidence="1">
    <location>
        <begin position="99"/>
        <end position="119"/>
    </location>
</feature>
<feature type="transmembrane region" description="Helical" evidence="1">
    <location>
        <begin position="120"/>
        <end position="140"/>
    </location>
</feature>
<feature type="transmembrane region" description="Helical" evidence="1">
    <location>
        <begin position="149"/>
        <end position="169"/>
    </location>
</feature>
<feature type="transmembrane region" description="Helical" evidence="1">
    <location>
        <begin position="186"/>
        <end position="206"/>
    </location>
</feature>
<feature type="transmembrane region" description="Helical" evidence="1">
    <location>
        <begin position="223"/>
        <end position="243"/>
    </location>
</feature>
<feature type="transmembrane region" description="Helical" evidence="1">
    <location>
        <begin position="258"/>
        <end position="278"/>
    </location>
</feature>
<feature type="transmembrane region" description="Helical" evidence="1">
    <location>
        <begin position="300"/>
        <end position="320"/>
    </location>
</feature>
<feature type="transmembrane region" description="Helical" evidence="1">
    <location>
        <begin position="322"/>
        <end position="342"/>
    </location>
</feature>
<feature type="transmembrane region" description="Helical" evidence="1">
    <location>
        <begin position="343"/>
        <end position="363"/>
    </location>
</feature>
<feature type="transmembrane region" description="Helical" evidence="1">
    <location>
        <begin position="371"/>
        <end position="391"/>
    </location>
</feature>
<protein>
    <recommendedName>
        <fullName evidence="1">Putative ion-transport protein YfeO</fullName>
    </recommendedName>
</protein>
<comment type="subcellular location">
    <subcellularLocation>
        <location evidence="1">Cell membrane</location>
        <topology evidence="1">Multi-pass membrane protein</topology>
    </subcellularLocation>
</comment>
<comment type="similarity">
    <text evidence="1">Belongs to the chloride channel (TC 2.A.49) family.</text>
</comment>
<organism>
    <name type="scientific">Escherichia coli (strain SE11)</name>
    <dbReference type="NCBI Taxonomy" id="409438"/>
    <lineage>
        <taxon>Bacteria</taxon>
        <taxon>Pseudomonadati</taxon>
        <taxon>Pseudomonadota</taxon>
        <taxon>Gammaproteobacteria</taxon>
        <taxon>Enterobacterales</taxon>
        <taxon>Enterobacteriaceae</taxon>
        <taxon>Escherichia</taxon>
    </lineage>
</organism>
<dbReference type="EMBL" id="AP009240">
    <property type="protein sequence ID" value="BAG78210.1"/>
    <property type="molecule type" value="Genomic_DNA"/>
</dbReference>
<dbReference type="RefSeq" id="WP_000903106.1">
    <property type="nucleotide sequence ID" value="NC_011415.1"/>
</dbReference>
<dbReference type="SMR" id="B6I6U0"/>
<dbReference type="KEGG" id="ecy:ECSE_2686"/>
<dbReference type="HOGENOM" id="CLU_053130_0_0_6"/>
<dbReference type="Proteomes" id="UP000008199">
    <property type="component" value="Chromosome"/>
</dbReference>
<dbReference type="GO" id="GO:0005886">
    <property type="term" value="C:plasma membrane"/>
    <property type="evidence" value="ECO:0007669"/>
    <property type="project" value="UniProtKB-SubCell"/>
</dbReference>
<dbReference type="GO" id="GO:0015108">
    <property type="term" value="F:chloride transmembrane transporter activity"/>
    <property type="evidence" value="ECO:0007669"/>
    <property type="project" value="InterPro"/>
</dbReference>
<dbReference type="GO" id="GO:0005216">
    <property type="term" value="F:monoatomic ion channel activity"/>
    <property type="evidence" value="ECO:0007669"/>
    <property type="project" value="UniProtKB-UniRule"/>
</dbReference>
<dbReference type="CDD" id="cd00400">
    <property type="entry name" value="Voltage_gated_ClC"/>
    <property type="match status" value="1"/>
</dbReference>
<dbReference type="FunFam" id="1.10.3080.10:FF:000007">
    <property type="entry name" value="Putative ion-transport protein YfeO"/>
    <property type="match status" value="1"/>
</dbReference>
<dbReference type="Gene3D" id="1.10.3080.10">
    <property type="entry name" value="Clc chloride channel"/>
    <property type="match status" value="1"/>
</dbReference>
<dbReference type="HAMAP" id="MF_01115">
    <property type="entry name" value="CLC_YfeO"/>
    <property type="match status" value="1"/>
</dbReference>
<dbReference type="InterPro" id="IPR022969">
    <property type="entry name" value="Chloride_channel_YfeO"/>
</dbReference>
<dbReference type="InterPro" id="IPR014743">
    <property type="entry name" value="Cl-channel_core"/>
</dbReference>
<dbReference type="InterPro" id="IPR001807">
    <property type="entry name" value="ClC"/>
</dbReference>
<dbReference type="InterPro" id="IPR050368">
    <property type="entry name" value="ClC-type_chloride_channel"/>
</dbReference>
<dbReference type="NCBIfam" id="NF002971">
    <property type="entry name" value="PRK03655.1"/>
    <property type="match status" value="1"/>
</dbReference>
<dbReference type="PANTHER" id="PTHR43427">
    <property type="entry name" value="CHLORIDE CHANNEL PROTEIN CLC-E"/>
    <property type="match status" value="1"/>
</dbReference>
<dbReference type="PANTHER" id="PTHR43427:SF9">
    <property type="entry name" value="ION-TRANSPORT PROTEIN YFEO-RELATED"/>
    <property type="match status" value="1"/>
</dbReference>
<dbReference type="Pfam" id="PF00654">
    <property type="entry name" value="Voltage_CLC"/>
    <property type="match status" value="1"/>
</dbReference>
<dbReference type="PRINTS" id="PR00762">
    <property type="entry name" value="CLCHANNEL"/>
</dbReference>
<dbReference type="SUPFAM" id="SSF81340">
    <property type="entry name" value="Clc chloride channel"/>
    <property type="match status" value="1"/>
</dbReference>
<gene>
    <name evidence="1" type="primary">yfeO</name>
    <name type="ordered locus">ECSE_2686</name>
</gene>
<reference key="1">
    <citation type="journal article" date="2008" name="DNA Res.">
        <title>Complete genome sequence and comparative analysis of the wild-type commensal Escherichia coli strain SE11 isolated from a healthy adult.</title>
        <authorList>
            <person name="Oshima K."/>
            <person name="Toh H."/>
            <person name="Ogura Y."/>
            <person name="Sasamoto H."/>
            <person name="Morita H."/>
            <person name="Park S.-H."/>
            <person name="Ooka T."/>
            <person name="Iyoda S."/>
            <person name="Taylor T.D."/>
            <person name="Hayashi T."/>
            <person name="Itoh K."/>
            <person name="Hattori M."/>
        </authorList>
    </citation>
    <scope>NUCLEOTIDE SEQUENCE [LARGE SCALE GENOMIC DNA]</scope>
    <source>
        <strain>SE11</strain>
    </source>
</reference>
<name>YFEO_ECOSE</name>
<keyword id="KW-1003">Cell membrane</keyword>
<keyword id="KW-0407">Ion channel</keyword>
<keyword id="KW-0406">Ion transport</keyword>
<keyword id="KW-0472">Membrane</keyword>
<keyword id="KW-0812">Transmembrane</keyword>
<keyword id="KW-1133">Transmembrane helix</keyword>
<keyword id="KW-0813">Transport</keyword>